<evidence type="ECO:0000250" key="1"/>
<evidence type="ECO:0000305" key="2"/>
<gene>
    <name type="primary">hisC</name>
    <name type="ordered locus">CE2002</name>
</gene>
<protein>
    <recommendedName>
        <fullName>Histidinol-phosphate aminotransferase</fullName>
        <ecNumber>2.6.1.9</ecNumber>
    </recommendedName>
    <alternativeName>
        <fullName>Imidazole acetol-phosphate transaminase</fullName>
    </alternativeName>
</protein>
<proteinExistence type="inferred from homology"/>
<organism>
    <name type="scientific">Corynebacterium efficiens (strain DSM 44549 / YS-314 / AJ 12310 / JCM 11189 / NBRC 100395)</name>
    <dbReference type="NCBI Taxonomy" id="196164"/>
    <lineage>
        <taxon>Bacteria</taxon>
        <taxon>Bacillati</taxon>
        <taxon>Actinomycetota</taxon>
        <taxon>Actinomycetes</taxon>
        <taxon>Mycobacteriales</taxon>
        <taxon>Corynebacteriaceae</taxon>
        <taxon>Corynebacterium</taxon>
    </lineage>
</organism>
<keyword id="KW-0028">Amino-acid biosynthesis</keyword>
<keyword id="KW-0032">Aminotransferase</keyword>
<keyword id="KW-0368">Histidine biosynthesis</keyword>
<keyword id="KW-0663">Pyridoxal phosphate</keyword>
<keyword id="KW-1185">Reference proteome</keyword>
<keyword id="KW-0808">Transferase</keyword>
<reference key="1">
    <citation type="journal article" date="2003" name="Genome Res.">
        <title>Comparative complete genome sequence analysis of the amino acid replacements responsible for the thermostability of Corynebacterium efficiens.</title>
        <authorList>
            <person name="Nishio Y."/>
            <person name="Nakamura Y."/>
            <person name="Kawarabayasi Y."/>
            <person name="Usuda Y."/>
            <person name="Kimura E."/>
            <person name="Sugimoto S."/>
            <person name="Matsui K."/>
            <person name="Yamagishi A."/>
            <person name="Kikuchi H."/>
            <person name="Ikeo K."/>
            <person name="Gojobori T."/>
        </authorList>
    </citation>
    <scope>NUCLEOTIDE SEQUENCE [LARGE SCALE GENOMIC DNA]</scope>
    <source>
        <strain>DSM 44549 / YS-314 / AJ 12310 / JCM 11189 / NBRC 100395</strain>
    </source>
</reference>
<dbReference type="EC" id="2.6.1.9"/>
<dbReference type="EMBL" id="BA000035">
    <property type="protein sequence ID" value="BAC18812.1"/>
    <property type="molecule type" value="Genomic_DNA"/>
</dbReference>
<dbReference type="RefSeq" id="WP_006768000.1">
    <property type="nucleotide sequence ID" value="NC_004369.1"/>
</dbReference>
<dbReference type="SMR" id="Q8FNZ1"/>
<dbReference type="STRING" id="196164.gene:10742430"/>
<dbReference type="KEGG" id="cef:CE2002"/>
<dbReference type="eggNOG" id="COG0079">
    <property type="taxonomic scope" value="Bacteria"/>
</dbReference>
<dbReference type="HOGENOM" id="CLU_017584_3_1_11"/>
<dbReference type="OrthoDB" id="9809616at2"/>
<dbReference type="UniPathway" id="UPA00031">
    <property type="reaction ID" value="UER00012"/>
</dbReference>
<dbReference type="Proteomes" id="UP000001409">
    <property type="component" value="Chromosome"/>
</dbReference>
<dbReference type="GO" id="GO:0004400">
    <property type="term" value="F:histidinol-phosphate transaminase activity"/>
    <property type="evidence" value="ECO:0007669"/>
    <property type="project" value="UniProtKB-UniRule"/>
</dbReference>
<dbReference type="GO" id="GO:0030170">
    <property type="term" value="F:pyridoxal phosphate binding"/>
    <property type="evidence" value="ECO:0007669"/>
    <property type="project" value="InterPro"/>
</dbReference>
<dbReference type="GO" id="GO:0000105">
    <property type="term" value="P:L-histidine biosynthetic process"/>
    <property type="evidence" value="ECO:0007669"/>
    <property type="project" value="UniProtKB-UniRule"/>
</dbReference>
<dbReference type="CDD" id="cd00609">
    <property type="entry name" value="AAT_like"/>
    <property type="match status" value="1"/>
</dbReference>
<dbReference type="Gene3D" id="3.90.1150.10">
    <property type="entry name" value="Aspartate Aminotransferase, domain 1"/>
    <property type="match status" value="1"/>
</dbReference>
<dbReference type="Gene3D" id="3.40.640.10">
    <property type="entry name" value="Type I PLP-dependent aspartate aminotransferase-like (Major domain)"/>
    <property type="match status" value="1"/>
</dbReference>
<dbReference type="HAMAP" id="MF_01023">
    <property type="entry name" value="HisC_aminotrans_2"/>
    <property type="match status" value="1"/>
</dbReference>
<dbReference type="InterPro" id="IPR004839">
    <property type="entry name" value="Aminotransferase_I/II_large"/>
</dbReference>
<dbReference type="InterPro" id="IPR005861">
    <property type="entry name" value="HisP_aminotrans"/>
</dbReference>
<dbReference type="InterPro" id="IPR015424">
    <property type="entry name" value="PyrdxlP-dep_Trfase"/>
</dbReference>
<dbReference type="InterPro" id="IPR015421">
    <property type="entry name" value="PyrdxlP-dep_Trfase_major"/>
</dbReference>
<dbReference type="InterPro" id="IPR015422">
    <property type="entry name" value="PyrdxlP-dep_Trfase_small"/>
</dbReference>
<dbReference type="NCBIfam" id="TIGR01141">
    <property type="entry name" value="hisC"/>
    <property type="match status" value="1"/>
</dbReference>
<dbReference type="NCBIfam" id="NF002877">
    <property type="entry name" value="PRK03317.1"/>
    <property type="match status" value="1"/>
</dbReference>
<dbReference type="PANTHER" id="PTHR42885:SF2">
    <property type="entry name" value="HISTIDINOL-PHOSPHATE AMINOTRANSFERASE"/>
    <property type="match status" value="1"/>
</dbReference>
<dbReference type="PANTHER" id="PTHR42885">
    <property type="entry name" value="HISTIDINOL-PHOSPHATE AMINOTRANSFERASE-RELATED"/>
    <property type="match status" value="1"/>
</dbReference>
<dbReference type="Pfam" id="PF00155">
    <property type="entry name" value="Aminotran_1_2"/>
    <property type="match status" value="1"/>
</dbReference>
<dbReference type="SUPFAM" id="SSF53383">
    <property type="entry name" value="PLP-dependent transferases"/>
    <property type="match status" value="1"/>
</dbReference>
<name>HIS8_COREF</name>
<sequence>MTDTTLAPEVTLSDLPLREELRGESAYGAPQLNVSVRLNTNENPYPPSEALIADLVETVRATATELNRYPERDSVELRDALADYITHQTGVQVTRENLWAANGSNEVLQQLLQAFGGPGRKALGFQPSYSMHPILSKGTQTEFIAIPRGADFRIDMDAALAAIEEHVPDIIFVTTPNNPTGDITSLADIEKIINAAPGIVIVDEAYAEFSPSPSATTLITRYPAKLVVSRTMSKAFDFAGGRLGYFVAAPAFIEAVMLVRLPYHLSALSQAAATVALRHRDDTLATVAKLSSERIRVAARLEELGYTQVPSESNFIFFGKFTDQHTAWEAFLDRGVLIRDVGVSGHLRVTIGLPEENDSFLAAAAEISGLNL</sequence>
<comment type="catalytic activity">
    <reaction>
        <text>L-histidinol phosphate + 2-oxoglutarate = 3-(imidazol-4-yl)-2-oxopropyl phosphate + L-glutamate</text>
        <dbReference type="Rhea" id="RHEA:23744"/>
        <dbReference type="ChEBI" id="CHEBI:16810"/>
        <dbReference type="ChEBI" id="CHEBI:29985"/>
        <dbReference type="ChEBI" id="CHEBI:57766"/>
        <dbReference type="ChEBI" id="CHEBI:57980"/>
        <dbReference type="EC" id="2.6.1.9"/>
    </reaction>
</comment>
<comment type="cofactor">
    <cofactor evidence="1">
        <name>pyridoxal 5'-phosphate</name>
        <dbReference type="ChEBI" id="CHEBI:597326"/>
    </cofactor>
</comment>
<comment type="pathway">
    <text>Amino-acid biosynthesis; L-histidine biosynthesis; L-histidine from 5-phospho-alpha-D-ribose 1-diphosphate: step 7/9.</text>
</comment>
<comment type="subunit">
    <text evidence="1">Homodimer.</text>
</comment>
<comment type="similarity">
    <text evidence="2">Belongs to the class-II pyridoxal-phosphate-dependent aminotransferase family. Histidinol-phosphate aminotransferase subfamily.</text>
</comment>
<accession>Q8FNZ1</accession>
<feature type="chain" id="PRO_0000153349" description="Histidinol-phosphate aminotransferase">
    <location>
        <begin position="1"/>
        <end position="372"/>
    </location>
</feature>
<feature type="modified residue" description="N6-(pyridoxal phosphate)lysine" evidence="1">
    <location>
        <position position="234"/>
    </location>
</feature>